<sequence>MGGISIWQLLIIALIVVLLFGTKKLRSLGGDLGGAVKGFKNAMSSDEDKKALEDAEAAKSVQTAQTAQPTQQATEKKPESNKEQA</sequence>
<dbReference type="EMBL" id="CP000469">
    <property type="protein sequence ID" value="ABK49946.1"/>
    <property type="molecule type" value="Genomic_DNA"/>
</dbReference>
<dbReference type="RefSeq" id="WP_011718485.1">
    <property type="nucleotide sequence ID" value="NC_008577.1"/>
</dbReference>
<dbReference type="SMR" id="A0L1M7"/>
<dbReference type="STRING" id="94122.Shewana3_3728"/>
<dbReference type="GeneID" id="94729649"/>
<dbReference type="KEGG" id="shn:Shewana3_3728"/>
<dbReference type="eggNOG" id="COG1826">
    <property type="taxonomic scope" value="Bacteria"/>
</dbReference>
<dbReference type="HOGENOM" id="CLU_086034_5_1_6"/>
<dbReference type="Proteomes" id="UP000002589">
    <property type="component" value="Chromosome"/>
</dbReference>
<dbReference type="GO" id="GO:0033281">
    <property type="term" value="C:TAT protein transport complex"/>
    <property type="evidence" value="ECO:0007669"/>
    <property type="project" value="UniProtKB-UniRule"/>
</dbReference>
<dbReference type="GO" id="GO:0008320">
    <property type="term" value="F:protein transmembrane transporter activity"/>
    <property type="evidence" value="ECO:0007669"/>
    <property type="project" value="UniProtKB-UniRule"/>
</dbReference>
<dbReference type="GO" id="GO:0043953">
    <property type="term" value="P:protein transport by the Tat complex"/>
    <property type="evidence" value="ECO:0007669"/>
    <property type="project" value="UniProtKB-UniRule"/>
</dbReference>
<dbReference type="Gene3D" id="1.20.5.3310">
    <property type="match status" value="1"/>
</dbReference>
<dbReference type="HAMAP" id="MF_00236">
    <property type="entry name" value="TatA_E"/>
    <property type="match status" value="1"/>
</dbReference>
<dbReference type="InterPro" id="IPR003369">
    <property type="entry name" value="TatA/B/E"/>
</dbReference>
<dbReference type="InterPro" id="IPR006312">
    <property type="entry name" value="TatA/E"/>
</dbReference>
<dbReference type="NCBIfam" id="NF002813">
    <property type="entry name" value="PRK02958.1"/>
    <property type="match status" value="1"/>
</dbReference>
<dbReference type="NCBIfam" id="TIGR01411">
    <property type="entry name" value="tatAE"/>
    <property type="match status" value="1"/>
</dbReference>
<dbReference type="PANTHER" id="PTHR42982">
    <property type="entry name" value="SEC-INDEPENDENT PROTEIN TRANSLOCASE PROTEIN TATA"/>
    <property type="match status" value="1"/>
</dbReference>
<dbReference type="PANTHER" id="PTHR42982:SF1">
    <property type="entry name" value="SEC-INDEPENDENT PROTEIN TRANSLOCASE PROTEIN TATA"/>
    <property type="match status" value="1"/>
</dbReference>
<dbReference type="Pfam" id="PF02416">
    <property type="entry name" value="TatA_B_E"/>
    <property type="match status" value="1"/>
</dbReference>
<keyword id="KW-0997">Cell inner membrane</keyword>
<keyword id="KW-1003">Cell membrane</keyword>
<keyword id="KW-0472">Membrane</keyword>
<keyword id="KW-0653">Protein transport</keyword>
<keyword id="KW-0811">Translocation</keyword>
<keyword id="KW-0812">Transmembrane</keyword>
<keyword id="KW-1133">Transmembrane helix</keyword>
<keyword id="KW-0813">Transport</keyword>
<organism>
    <name type="scientific">Shewanella sp. (strain ANA-3)</name>
    <dbReference type="NCBI Taxonomy" id="94122"/>
    <lineage>
        <taxon>Bacteria</taxon>
        <taxon>Pseudomonadati</taxon>
        <taxon>Pseudomonadota</taxon>
        <taxon>Gammaproteobacteria</taxon>
        <taxon>Alteromonadales</taxon>
        <taxon>Shewanellaceae</taxon>
        <taxon>Shewanella</taxon>
    </lineage>
</organism>
<comment type="function">
    <text evidence="1">Part of the twin-arginine translocation (Tat) system that transports large folded proteins containing a characteristic twin-arginine motif in their signal peptide across membranes. TatA could form the protein-conducting channel of the Tat system.</text>
</comment>
<comment type="subunit">
    <text evidence="1">The Tat system comprises two distinct complexes: a TatABC complex, containing multiple copies of TatA, TatB and TatC subunits, and a separate TatA complex, containing only TatA subunits. Substrates initially bind to the TatABC complex, which probably triggers association of the separate TatA complex to form the active translocon.</text>
</comment>
<comment type="subcellular location">
    <subcellularLocation>
        <location evidence="1">Cell inner membrane</location>
        <topology evidence="1">Single-pass membrane protein</topology>
    </subcellularLocation>
</comment>
<comment type="similarity">
    <text evidence="1">Belongs to the TatA/E family.</text>
</comment>
<gene>
    <name evidence="1" type="primary">tatA</name>
    <name type="ordered locus">Shewana3_3728</name>
</gene>
<reference key="1">
    <citation type="submission" date="2006-09" db="EMBL/GenBank/DDBJ databases">
        <title>Complete sequence of chromosome 1 of Shewanella sp. ANA-3.</title>
        <authorList>
            <person name="Copeland A."/>
            <person name="Lucas S."/>
            <person name="Lapidus A."/>
            <person name="Barry K."/>
            <person name="Detter J.C."/>
            <person name="Glavina del Rio T."/>
            <person name="Hammon N."/>
            <person name="Israni S."/>
            <person name="Dalin E."/>
            <person name="Tice H."/>
            <person name="Pitluck S."/>
            <person name="Chertkov O."/>
            <person name="Brettin T."/>
            <person name="Bruce D."/>
            <person name="Han C."/>
            <person name="Tapia R."/>
            <person name="Gilna P."/>
            <person name="Schmutz J."/>
            <person name="Larimer F."/>
            <person name="Land M."/>
            <person name="Hauser L."/>
            <person name="Kyrpides N."/>
            <person name="Kim E."/>
            <person name="Newman D."/>
            <person name="Salticov C."/>
            <person name="Konstantinidis K."/>
            <person name="Klappenback J."/>
            <person name="Tiedje J."/>
            <person name="Richardson P."/>
        </authorList>
    </citation>
    <scope>NUCLEOTIDE SEQUENCE [LARGE SCALE GENOMIC DNA]</scope>
    <source>
        <strain>ANA-3</strain>
    </source>
</reference>
<feature type="chain" id="PRO_1000044445" description="Sec-independent protein translocase protein TatA">
    <location>
        <begin position="1"/>
        <end position="85"/>
    </location>
</feature>
<feature type="transmembrane region" description="Helical" evidence="1">
    <location>
        <begin position="1"/>
        <end position="21"/>
    </location>
</feature>
<feature type="region of interest" description="Disordered" evidence="2">
    <location>
        <begin position="43"/>
        <end position="85"/>
    </location>
</feature>
<feature type="compositionally biased region" description="Basic and acidic residues" evidence="2">
    <location>
        <begin position="46"/>
        <end position="57"/>
    </location>
</feature>
<feature type="compositionally biased region" description="Low complexity" evidence="2">
    <location>
        <begin position="58"/>
        <end position="73"/>
    </location>
</feature>
<feature type="compositionally biased region" description="Basic and acidic residues" evidence="2">
    <location>
        <begin position="74"/>
        <end position="85"/>
    </location>
</feature>
<accession>A0L1M7</accession>
<name>TATA_SHESA</name>
<evidence type="ECO:0000255" key="1">
    <source>
        <dbReference type="HAMAP-Rule" id="MF_00236"/>
    </source>
</evidence>
<evidence type="ECO:0000256" key="2">
    <source>
        <dbReference type="SAM" id="MobiDB-lite"/>
    </source>
</evidence>
<protein>
    <recommendedName>
        <fullName evidence="1">Sec-independent protein translocase protein TatA</fullName>
    </recommendedName>
</protein>
<proteinExistence type="inferred from homology"/>